<sequence length="90" mass="9960">MAHHKSAKKRIRQTERRTEVNRARVSRIRTYVKKVELAIAGGDSAAAQAALQEAQPELMKGAQAGILHKNTASRKVSRLVARVKEMKSLA</sequence>
<reference key="1">
    <citation type="journal article" date="2005" name="DNA Res.">
        <title>Complete genome sequence of the facultative anaerobic magnetotactic bacterium Magnetospirillum sp. strain AMB-1.</title>
        <authorList>
            <person name="Matsunaga T."/>
            <person name="Okamura Y."/>
            <person name="Fukuda Y."/>
            <person name="Wahyudi A.T."/>
            <person name="Murase Y."/>
            <person name="Takeyama H."/>
        </authorList>
    </citation>
    <scope>NUCLEOTIDE SEQUENCE [LARGE SCALE GENOMIC DNA]</scope>
    <source>
        <strain>ATCC 700264 / AMB-1</strain>
    </source>
</reference>
<comment type="function">
    <text evidence="1">Binds directly to 16S ribosomal RNA.</text>
</comment>
<comment type="similarity">
    <text evidence="1">Belongs to the bacterial ribosomal protein bS20 family.</text>
</comment>
<evidence type="ECO:0000255" key="1">
    <source>
        <dbReference type="HAMAP-Rule" id="MF_00500"/>
    </source>
</evidence>
<evidence type="ECO:0000256" key="2">
    <source>
        <dbReference type="SAM" id="MobiDB-lite"/>
    </source>
</evidence>
<evidence type="ECO:0000305" key="3"/>
<dbReference type="EMBL" id="AP007255">
    <property type="protein sequence ID" value="BAE49439.1"/>
    <property type="molecule type" value="Genomic_DNA"/>
</dbReference>
<dbReference type="RefSeq" id="WP_011383078.1">
    <property type="nucleotide sequence ID" value="NC_007626.1"/>
</dbReference>
<dbReference type="SMR" id="Q2W9N6"/>
<dbReference type="STRING" id="342108.amb0635"/>
<dbReference type="KEGG" id="mag:amb0635"/>
<dbReference type="HOGENOM" id="CLU_160655_3_0_5"/>
<dbReference type="OrthoDB" id="9807974at2"/>
<dbReference type="Proteomes" id="UP000007058">
    <property type="component" value="Chromosome"/>
</dbReference>
<dbReference type="GO" id="GO:0015935">
    <property type="term" value="C:small ribosomal subunit"/>
    <property type="evidence" value="ECO:0007669"/>
    <property type="project" value="TreeGrafter"/>
</dbReference>
<dbReference type="GO" id="GO:0070181">
    <property type="term" value="F:small ribosomal subunit rRNA binding"/>
    <property type="evidence" value="ECO:0007669"/>
    <property type="project" value="TreeGrafter"/>
</dbReference>
<dbReference type="GO" id="GO:0003735">
    <property type="term" value="F:structural constituent of ribosome"/>
    <property type="evidence" value="ECO:0007669"/>
    <property type="project" value="InterPro"/>
</dbReference>
<dbReference type="GO" id="GO:0006412">
    <property type="term" value="P:translation"/>
    <property type="evidence" value="ECO:0007669"/>
    <property type="project" value="UniProtKB-UniRule"/>
</dbReference>
<dbReference type="FunFam" id="1.20.58.110:FF:000001">
    <property type="entry name" value="30S ribosomal protein S20"/>
    <property type="match status" value="1"/>
</dbReference>
<dbReference type="Gene3D" id="1.20.58.110">
    <property type="entry name" value="Ribosomal protein S20"/>
    <property type="match status" value="1"/>
</dbReference>
<dbReference type="HAMAP" id="MF_00500">
    <property type="entry name" value="Ribosomal_bS20"/>
    <property type="match status" value="1"/>
</dbReference>
<dbReference type="InterPro" id="IPR002583">
    <property type="entry name" value="Ribosomal_bS20"/>
</dbReference>
<dbReference type="InterPro" id="IPR036510">
    <property type="entry name" value="Ribosomal_bS20_sf"/>
</dbReference>
<dbReference type="NCBIfam" id="TIGR00029">
    <property type="entry name" value="S20"/>
    <property type="match status" value="1"/>
</dbReference>
<dbReference type="PANTHER" id="PTHR33398">
    <property type="entry name" value="30S RIBOSOMAL PROTEIN S20"/>
    <property type="match status" value="1"/>
</dbReference>
<dbReference type="PANTHER" id="PTHR33398:SF1">
    <property type="entry name" value="SMALL RIBOSOMAL SUBUNIT PROTEIN BS20C"/>
    <property type="match status" value="1"/>
</dbReference>
<dbReference type="Pfam" id="PF01649">
    <property type="entry name" value="Ribosomal_S20p"/>
    <property type="match status" value="1"/>
</dbReference>
<dbReference type="SUPFAM" id="SSF46992">
    <property type="entry name" value="Ribosomal protein S20"/>
    <property type="match status" value="1"/>
</dbReference>
<proteinExistence type="inferred from homology"/>
<protein>
    <recommendedName>
        <fullName evidence="1">Small ribosomal subunit protein bS20</fullName>
    </recommendedName>
    <alternativeName>
        <fullName evidence="3">30S ribosomal protein S20</fullName>
    </alternativeName>
</protein>
<name>RS20_PARM1</name>
<organism>
    <name type="scientific">Paramagnetospirillum magneticum (strain ATCC 700264 / AMB-1)</name>
    <name type="common">Magnetospirillum magneticum</name>
    <dbReference type="NCBI Taxonomy" id="342108"/>
    <lineage>
        <taxon>Bacteria</taxon>
        <taxon>Pseudomonadati</taxon>
        <taxon>Pseudomonadota</taxon>
        <taxon>Alphaproteobacteria</taxon>
        <taxon>Rhodospirillales</taxon>
        <taxon>Magnetospirillaceae</taxon>
        <taxon>Paramagnetospirillum</taxon>
    </lineage>
</organism>
<accession>Q2W9N6</accession>
<keyword id="KW-0687">Ribonucleoprotein</keyword>
<keyword id="KW-0689">Ribosomal protein</keyword>
<keyword id="KW-0694">RNA-binding</keyword>
<keyword id="KW-0699">rRNA-binding</keyword>
<gene>
    <name evidence="1" type="primary">rpsT</name>
    <name type="ordered locus">amb0635</name>
</gene>
<feature type="chain" id="PRO_0000236437" description="Small ribosomal subunit protein bS20">
    <location>
        <begin position="1"/>
        <end position="90"/>
    </location>
</feature>
<feature type="region of interest" description="Disordered" evidence="2">
    <location>
        <begin position="1"/>
        <end position="22"/>
    </location>
</feature>
<feature type="compositionally biased region" description="Basic residues" evidence="2">
    <location>
        <begin position="1"/>
        <end position="11"/>
    </location>
</feature>
<feature type="compositionally biased region" description="Basic and acidic residues" evidence="2">
    <location>
        <begin position="12"/>
        <end position="22"/>
    </location>
</feature>